<keyword id="KW-0687">Ribonucleoprotein</keyword>
<keyword id="KW-0689">Ribosomal protein</keyword>
<keyword id="KW-0694">RNA-binding</keyword>
<keyword id="KW-0699">rRNA-binding</keyword>
<comment type="function">
    <text evidence="1">Binds 16S rRNA, required for the assembly of 30S particles and may also be responsible for determining the conformation of the 16S rRNA at the A site.</text>
</comment>
<comment type="subunit">
    <text evidence="1">Part of the 30S ribosomal subunit. Contacts proteins S3 and S10.</text>
</comment>
<comment type="similarity">
    <text evidence="1">Belongs to the universal ribosomal protein uS14 family.</text>
</comment>
<evidence type="ECO:0000255" key="1">
    <source>
        <dbReference type="HAMAP-Rule" id="MF_00537"/>
    </source>
</evidence>
<evidence type="ECO:0000305" key="2"/>
<name>RS14_CHLMU</name>
<accession>Q9PLD4</accession>
<feature type="chain" id="PRO_0000130884" description="Small ribosomal subunit protein uS14">
    <location>
        <begin position="1"/>
        <end position="101"/>
    </location>
</feature>
<protein>
    <recommendedName>
        <fullName evidence="1">Small ribosomal subunit protein uS14</fullName>
    </recommendedName>
    <alternativeName>
        <fullName evidence="2">30S ribosomal protein S14</fullName>
    </alternativeName>
</protein>
<gene>
    <name evidence="1" type="primary">rpsN</name>
    <name type="ordered locus">TC_0170</name>
</gene>
<dbReference type="EMBL" id="AE002160">
    <property type="protein sequence ID" value="AAF39044.1"/>
    <property type="molecule type" value="Genomic_DNA"/>
</dbReference>
<dbReference type="PIR" id="C81733">
    <property type="entry name" value="C81733"/>
</dbReference>
<dbReference type="RefSeq" id="WP_010229698.1">
    <property type="nucleotide sequence ID" value="NZ_CP063055.1"/>
</dbReference>
<dbReference type="SMR" id="Q9PLD4"/>
<dbReference type="GeneID" id="1246295"/>
<dbReference type="KEGG" id="cmu:TC_0170"/>
<dbReference type="eggNOG" id="COG0199">
    <property type="taxonomic scope" value="Bacteria"/>
</dbReference>
<dbReference type="HOGENOM" id="CLU_139869_0_1_0"/>
<dbReference type="OrthoDB" id="9810484at2"/>
<dbReference type="Proteomes" id="UP000000800">
    <property type="component" value="Chromosome"/>
</dbReference>
<dbReference type="GO" id="GO:0005737">
    <property type="term" value="C:cytoplasm"/>
    <property type="evidence" value="ECO:0007669"/>
    <property type="project" value="UniProtKB-ARBA"/>
</dbReference>
<dbReference type="GO" id="GO:0015935">
    <property type="term" value="C:small ribosomal subunit"/>
    <property type="evidence" value="ECO:0007669"/>
    <property type="project" value="TreeGrafter"/>
</dbReference>
<dbReference type="GO" id="GO:0019843">
    <property type="term" value="F:rRNA binding"/>
    <property type="evidence" value="ECO:0007669"/>
    <property type="project" value="UniProtKB-UniRule"/>
</dbReference>
<dbReference type="GO" id="GO:0003735">
    <property type="term" value="F:structural constituent of ribosome"/>
    <property type="evidence" value="ECO:0007669"/>
    <property type="project" value="InterPro"/>
</dbReference>
<dbReference type="GO" id="GO:0006412">
    <property type="term" value="P:translation"/>
    <property type="evidence" value="ECO:0007669"/>
    <property type="project" value="UniProtKB-UniRule"/>
</dbReference>
<dbReference type="FunFam" id="1.10.287.1480:FF:000001">
    <property type="entry name" value="30S ribosomal protein S14"/>
    <property type="match status" value="1"/>
</dbReference>
<dbReference type="Gene3D" id="1.10.287.1480">
    <property type="match status" value="1"/>
</dbReference>
<dbReference type="HAMAP" id="MF_00537">
    <property type="entry name" value="Ribosomal_uS14_1"/>
    <property type="match status" value="1"/>
</dbReference>
<dbReference type="InterPro" id="IPR001209">
    <property type="entry name" value="Ribosomal_uS14"/>
</dbReference>
<dbReference type="InterPro" id="IPR023036">
    <property type="entry name" value="Ribosomal_uS14_bac/plastid"/>
</dbReference>
<dbReference type="InterPro" id="IPR018271">
    <property type="entry name" value="Ribosomal_uS14_CS"/>
</dbReference>
<dbReference type="NCBIfam" id="NF006477">
    <property type="entry name" value="PRK08881.1"/>
    <property type="match status" value="1"/>
</dbReference>
<dbReference type="PANTHER" id="PTHR19836">
    <property type="entry name" value="30S RIBOSOMAL PROTEIN S14"/>
    <property type="match status" value="1"/>
</dbReference>
<dbReference type="PANTHER" id="PTHR19836:SF19">
    <property type="entry name" value="SMALL RIBOSOMAL SUBUNIT PROTEIN US14M"/>
    <property type="match status" value="1"/>
</dbReference>
<dbReference type="Pfam" id="PF00253">
    <property type="entry name" value="Ribosomal_S14"/>
    <property type="match status" value="1"/>
</dbReference>
<dbReference type="SUPFAM" id="SSF57716">
    <property type="entry name" value="Glucocorticoid receptor-like (DNA-binding domain)"/>
    <property type="match status" value="1"/>
</dbReference>
<dbReference type="PROSITE" id="PS00527">
    <property type="entry name" value="RIBOSOMAL_S14"/>
    <property type="match status" value="1"/>
</dbReference>
<proteinExistence type="inferred from homology"/>
<sequence>MAKKSAVAREVKRRKLVEANFQKRAELRKLAKSLSVSEEERERAREALNKMKRDTSPSRLHNRCLLTGRPRGYLRKFAISRICFRQMASMGDIPGVIKASW</sequence>
<reference key="1">
    <citation type="journal article" date="2000" name="Nucleic Acids Res.">
        <title>Genome sequences of Chlamydia trachomatis MoPn and Chlamydia pneumoniae AR39.</title>
        <authorList>
            <person name="Read T.D."/>
            <person name="Brunham R.C."/>
            <person name="Shen C."/>
            <person name="Gill S.R."/>
            <person name="Heidelberg J.F."/>
            <person name="White O."/>
            <person name="Hickey E.K."/>
            <person name="Peterson J.D."/>
            <person name="Utterback T.R."/>
            <person name="Berry K.J."/>
            <person name="Bass S."/>
            <person name="Linher K.D."/>
            <person name="Weidman J.F."/>
            <person name="Khouri H.M."/>
            <person name="Craven B."/>
            <person name="Bowman C."/>
            <person name="Dodson R.J."/>
            <person name="Gwinn M.L."/>
            <person name="Nelson W.C."/>
            <person name="DeBoy R.T."/>
            <person name="Kolonay J.F."/>
            <person name="McClarty G."/>
            <person name="Salzberg S.L."/>
            <person name="Eisen J.A."/>
            <person name="Fraser C.M."/>
        </authorList>
    </citation>
    <scope>NUCLEOTIDE SEQUENCE [LARGE SCALE GENOMIC DNA]</scope>
    <source>
        <strain>MoPn / Nigg</strain>
    </source>
</reference>
<organism>
    <name type="scientific">Chlamydia muridarum (strain MoPn / Nigg)</name>
    <dbReference type="NCBI Taxonomy" id="243161"/>
    <lineage>
        <taxon>Bacteria</taxon>
        <taxon>Pseudomonadati</taxon>
        <taxon>Chlamydiota</taxon>
        <taxon>Chlamydiia</taxon>
        <taxon>Chlamydiales</taxon>
        <taxon>Chlamydiaceae</taxon>
        <taxon>Chlamydia/Chlamydophila group</taxon>
        <taxon>Chlamydia</taxon>
    </lineage>
</organism>